<feature type="chain" id="PRO_1000049660" description="Large ribosomal subunit protein bL19">
    <location>
        <begin position="1"/>
        <end position="114"/>
    </location>
</feature>
<protein>
    <recommendedName>
        <fullName evidence="1">Large ribosomal subunit protein bL19</fullName>
    </recommendedName>
    <alternativeName>
        <fullName evidence="2">50S ribosomal protein L19</fullName>
    </alternativeName>
</protein>
<keyword id="KW-0687">Ribonucleoprotein</keyword>
<keyword id="KW-0689">Ribosomal protein</keyword>
<accession>A7FW08</accession>
<proteinExistence type="inferred from homology"/>
<evidence type="ECO:0000255" key="1">
    <source>
        <dbReference type="HAMAP-Rule" id="MF_00402"/>
    </source>
</evidence>
<evidence type="ECO:0000305" key="2"/>
<comment type="function">
    <text evidence="1">This protein is located at the 30S-50S ribosomal subunit interface and may play a role in the structure and function of the aminoacyl-tRNA binding site.</text>
</comment>
<comment type="similarity">
    <text evidence="1">Belongs to the bacterial ribosomal protein bL19 family.</text>
</comment>
<dbReference type="EMBL" id="CP000726">
    <property type="protein sequence ID" value="ABS33906.1"/>
    <property type="molecule type" value="Genomic_DNA"/>
</dbReference>
<dbReference type="RefSeq" id="WP_003362586.1">
    <property type="nucleotide sequence ID" value="NC_009697.1"/>
</dbReference>
<dbReference type="SMR" id="A7FW08"/>
<dbReference type="GeneID" id="5186699"/>
<dbReference type="KEGG" id="cba:CLB_2308"/>
<dbReference type="HOGENOM" id="CLU_103507_2_2_9"/>
<dbReference type="GO" id="GO:0022625">
    <property type="term" value="C:cytosolic large ribosomal subunit"/>
    <property type="evidence" value="ECO:0007669"/>
    <property type="project" value="TreeGrafter"/>
</dbReference>
<dbReference type="GO" id="GO:0003735">
    <property type="term" value="F:structural constituent of ribosome"/>
    <property type="evidence" value="ECO:0007669"/>
    <property type="project" value="InterPro"/>
</dbReference>
<dbReference type="GO" id="GO:0006412">
    <property type="term" value="P:translation"/>
    <property type="evidence" value="ECO:0007669"/>
    <property type="project" value="UniProtKB-UniRule"/>
</dbReference>
<dbReference type="FunFam" id="2.30.30.790:FF:000009">
    <property type="entry name" value="50S ribosomal protein L19"/>
    <property type="match status" value="1"/>
</dbReference>
<dbReference type="Gene3D" id="2.30.30.790">
    <property type="match status" value="1"/>
</dbReference>
<dbReference type="HAMAP" id="MF_00402">
    <property type="entry name" value="Ribosomal_bL19"/>
    <property type="match status" value="1"/>
</dbReference>
<dbReference type="InterPro" id="IPR001857">
    <property type="entry name" value="Ribosomal_bL19"/>
</dbReference>
<dbReference type="InterPro" id="IPR018257">
    <property type="entry name" value="Ribosomal_bL19_CS"/>
</dbReference>
<dbReference type="InterPro" id="IPR038657">
    <property type="entry name" value="Ribosomal_bL19_sf"/>
</dbReference>
<dbReference type="InterPro" id="IPR008991">
    <property type="entry name" value="Translation_prot_SH3-like_sf"/>
</dbReference>
<dbReference type="NCBIfam" id="TIGR01024">
    <property type="entry name" value="rplS_bact"/>
    <property type="match status" value="1"/>
</dbReference>
<dbReference type="PANTHER" id="PTHR15680:SF9">
    <property type="entry name" value="LARGE RIBOSOMAL SUBUNIT PROTEIN BL19M"/>
    <property type="match status" value="1"/>
</dbReference>
<dbReference type="PANTHER" id="PTHR15680">
    <property type="entry name" value="RIBOSOMAL PROTEIN L19"/>
    <property type="match status" value="1"/>
</dbReference>
<dbReference type="Pfam" id="PF01245">
    <property type="entry name" value="Ribosomal_L19"/>
    <property type="match status" value="1"/>
</dbReference>
<dbReference type="PIRSF" id="PIRSF002191">
    <property type="entry name" value="Ribosomal_L19"/>
    <property type="match status" value="1"/>
</dbReference>
<dbReference type="PRINTS" id="PR00061">
    <property type="entry name" value="RIBOSOMALL19"/>
</dbReference>
<dbReference type="SUPFAM" id="SSF50104">
    <property type="entry name" value="Translation proteins SH3-like domain"/>
    <property type="match status" value="1"/>
</dbReference>
<dbReference type="PROSITE" id="PS01015">
    <property type="entry name" value="RIBOSOMAL_L19"/>
    <property type="match status" value="1"/>
</dbReference>
<sequence>MLEVIKAIEAEQVRSDLPEFNVGDTVKVHQKIKEGTRERVQVFEGTVLKRQNGGARETFTVRRVAYNVAVEKTFPVNSPLIEKIQVVRKGKVRRAKLYYLRDRVGKAAKVKERI</sequence>
<gene>
    <name evidence="1" type="primary">rplS</name>
    <name type="ordered locus">CLB_2308</name>
</gene>
<reference key="1">
    <citation type="journal article" date="2007" name="PLoS ONE">
        <title>Analysis of the neurotoxin complex genes in Clostridium botulinum A1-A4 and B1 strains: BoNT/A3, /Ba4 and /B1 clusters are located within plasmids.</title>
        <authorList>
            <person name="Smith T.J."/>
            <person name="Hill K.K."/>
            <person name="Foley B.T."/>
            <person name="Detter J.C."/>
            <person name="Munk A.C."/>
            <person name="Bruce D.C."/>
            <person name="Doggett N.A."/>
            <person name="Smith L.A."/>
            <person name="Marks J.D."/>
            <person name="Xie G."/>
            <person name="Brettin T.S."/>
        </authorList>
    </citation>
    <scope>NUCLEOTIDE SEQUENCE [LARGE SCALE GENOMIC DNA]</scope>
    <source>
        <strain>ATCC 19397 / Type A</strain>
    </source>
</reference>
<organism>
    <name type="scientific">Clostridium botulinum (strain ATCC 19397 / Type A)</name>
    <dbReference type="NCBI Taxonomy" id="441770"/>
    <lineage>
        <taxon>Bacteria</taxon>
        <taxon>Bacillati</taxon>
        <taxon>Bacillota</taxon>
        <taxon>Clostridia</taxon>
        <taxon>Eubacteriales</taxon>
        <taxon>Clostridiaceae</taxon>
        <taxon>Clostridium</taxon>
    </lineage>
</organism>
<name>RL19_CLOB1</name>